<dbReference type="EMBL" id="CP000148">
    <property type="protein sequence ID" value="ABB33087.1"/>
    <property type="molecule type" value="Genomic_DNA"/>
</dbReference>
<dbReference type="RefSeq" id="WP_004514600.1">
    <property type="nucleotide sequence ID" value="NC_007517.1"/>
</dbReference>
<dbReference type="SMR" id="Q39RN7"/>
<dbReference type="STRING" id="269799.Gmet_2869"/>
<dbReference type="DNASU" id="3738926"/>
<dbReference type="KEGG" id="gme:Gmet_2869"/>
<dbReference type="eggNOG" id="COG0806">
    <property type="taxonomic scope" value="Bacteria"/>
</dbReference>
<dbReference type="HOGENOM" id="CLU_077636_1_0_7"/>
<dbReference type="Proteomes" id="UP000007073">
    <property type="component" value="Chromosome"/>
</dbReference>
<dbReference type="GO" id="GO:0005737">
    <property type="term" value="C:cytoplasm"/>
    <property type="evidence" value="ECO:0007669"/>
    <property type="project" value="UniProtKB-SubCell"/>
</dbReference>
<dbReference type="GO" id="GO:0005840">
    <property type="term" value="C:ribosome"/>
    <property type="evidence" value="ECO:0007669"/>
    <property type="project" value="InterPro"/>
</dbReference>
<dbReference type="GO" id="GO:0043022">
    <property type="term" value="F:ribosome binding"/>
    <property type="evidence" value="ECO:0007669"/>
    <property type="project" value="InterPro"/>
</dbReference>
<dbReference type="GO" id="GO:0042274">
    <property type="term" value="P:ribosomal small subunit biogenesis"/>
    <property type="evidence" value="ECO:0007669"/>
    <property type="project" value="UniProtKB-UniRule"/>
</dbReference>
<dbReference type="GO" id="GO:0006364">
    <property type="term" value="P:rRNA processing"/>
    <property type="evidence" value="ECO:0007669"/>
    <property type="project" value="UniProtKB-UniRule"/>
</dbReference>
<dbReference type="Gene3D" id="2.30.30.240">
    <property type="entry name" value="PRC-barrel domain"/>
    <property type="match status" value="1"/>
</dbReference>
<dbReference type="Gene3D" id="2.40.30.60">
    <property type="entry name" value="RimM"/>
    <property type="match status" value="1"/>
</dbReference>
<dbReference type="HAMAP" id="MF_00014">
    <property type="entry name" value="Ribosome_mat_RimM"/>
    <property type="match status" value="1"/>
</dbReference>
<dbReference type="InterPro" id="IPR011033">
    <property type="entry name" value="PRC_barrel-like_sf"/>
</dbReference>
<dbReference type="InterPro" id="IPR056792">
    <property type="entry name" value="PRC_RimM"/>
</dbReference>
<dbReference type="InterPro" id="IPR011961">
    <property type="entry name" value="RimM"/>
</dbReference>
<dbReference type="InterPro" id="IPR002676">
    <property type="entry name" value="RimM_N"/>
</dbReference>
<dbReference type="InterPro" id="IPR036976">
    <property type="entry name" value="RimM_N_sf"/>
</dbReference>
<dbReference type="InterPro" id="IPR009000">
    <property type="entry name" value="Transl_B-barrel_sf"/>
</dbReference>
<dbReference type="NCBIfam" id="TIGR02273">
    <property type="entry name" value="16S_RimM"/>
    <property type="match status" value="1"/>
</dbReference>
<dbReference type="PANTHER" id="PTHR33692">
    <property type="entry name" value="RIBOSOME MATURATION FACTOR RIMM"/>
    <property type="match status" value="1"/>
</dbReference>
<dbReference type="PANTHER" id="PTHR33692:SF1">
    <property type="entry name" value="RIBOSOME MATURATION FACTOR RIMM"/>
    <property type="match status" value="1"/>
</dbReference>
<dbReference type="Pfam" id="PF24986">
    <property type="entry name" value="PRC_RimM"/>
    <property type="match status" value="1"/>
</dbReference>
<dbReference type="Pfam" id="PF01782">
    <property type="entry name" value="RimM"/>
    <property type="match status" value="1"/>
</dbReference>
<dbReference type="SUPFAM" id="SSF50346">
    <property type="entry name" value="PRC-barrel domain"/>
    <property type="match status" value="1"/>
</dbReference>
<dbReference type="SUPFAM" id="SSF50447">
    <property type="entry name" value="Translation proteins"/>
    <property type="match status" value="1"/>
</dbReference>
<reference key="1">
    <citation type="journal article" date="2009" name="BMC Microbiol.">
        <title>The genome sequence of Geobacter metallireducens: features of metabolism, physiology and regulation common and dissimilar to Geobacter sulfurreducens.</title>
        <authorList>
            <person name="Aklujkar M."/>
            <person name="Krushkal J."/>
            <person name="DiBartolo G."/>
            <person name="Lapidus A."/>
            <person name="Land M.L."/>
            <person name="Lovley D.R."/>
        </authorList>
    </citation>
    <scope>NUCLEOTIDE SEQUENCE [LARGE SCALE GENOMIC DNA]</scope>
    <source>
        <strain>ATCC 53774 / DSM 7210 / GS-15</strain>
    </source>
</reference>
<name>RIMM_GEOMG</name>
<keyword id="KW-0143">Chaperone</keyword>
<keyword id="KW-0963">Cytoplasm</keyword>
<keyword id="KW-1185">Reference proteome</keyword>
<keyword id="KW-0690">Ribosome biogenesis</keyword>
<keyword id="KW-0698">rRNA processing</keyword>
<sequence>MLGSTDLVLLGKVVATHGIRGQLSVVPFSGEFSTILSMQTVYLSGPDNRKESFEVDRAAVHRNRVLLTLKGFANINEVLHLVGRELFARRDQFPPLDEGEFYWCDLIGLSVTTSEGLSLGRIEEIIATGSNDVYVVRDGEREYLIPALEDIVVGVDLDKGIMTVSPTEGLLDL</sequence>
<accession>Q39RN7</accession>
<gene>
    <name evidence="1" type="primary">rimM</name>
    <name type="ordered locus">Gmet_2869</name>
</gene>
<organism>
    <name type="scientific">Geobacter metallireducens (strain ATCC 53774 / DSM 7210 / GS-15)</name>
    <dbReference type="NCBI Taxonomy" id="269799"/>
    <lineage>
        <taxon>Bacteria</taxon>
        <taxon>Pseudomonadati</taxon>
        <taxon>Thermodesulfobacteriota</taxon>
        <taxon>Desulfuromonadia</taxon>
        <taxon>Geobacterales</taxon>
        <taxon>Geobacteraceae</taxon>
        <taxon>Geobacter</taxon>
    </lineage>
</organism>
<evidence type="ECO:0000255" key="1">
    <source>
        <dbReference type="HAMAP-Rule" id="MF_00014"/>
    </source>
</evidence>
<comment type="function">
    <text evidence="1">An accessory protein needed during the final step in the assembly of 30S ribosomal subunit, possibly for assembly of the head region. Essential for efficient processing of 16S rRNA. May be needed both before and after RbfA during the maturation of 16S rRNA. It has affinity for free ribosomal 30S subunits but not for 70S ribosomes.</text>
</comment>
<comment type="subunit">
    <text evidence="1">Binds ribosomal protein uS19.</text>
</comment>
<comment type="subcellular location">
    <subcellularLocation>
        <location evidence="1">Cytoplasm</location>
    </subcellularLocation>
</comment>
<comment type="domain">
    <text evidence="1">The PRC barrel domain binds ribosomal protein uS19.</text>
</comment>
<comment type="similarity">
    <text evidence="1">Belongs to the RimM family.</text>
</comment>
<proteinExistence type="inferred from homology"/>
<feature type="chain" id="PRO_0000244133" description="Ribosome maturation factor RimM">
    <location>
        <begin position="1"/>
        <end position="173"/>
    </location>
</feature>
<feature type="domain" description="PRC barrel" evidence="1">
    <location>
        <begin position="98"/>
        <end position="170"/>
    </location>
</feature>
<protein>
    <recommendedName>
        <fullName evidence="1">Ribosome maturation factor RimM</fullName>
    </recommendedName>
</protein>